<dbReference type="EC" id="2.1.1.148" evidence="1"/>
<dbReference type="EMBL" id="AE014184">
    <property type="protein sequence ID" value="AAO44713.1"/>
    <property type="molecule type" value="Genomic_DNA"/>
</dbReference>
<dbReference type="SMR" id="Q83MS7"/>
<dbReference type="STRING" id="203267.TWT_616"/>
<dbReference type="KEGG" id="twh:TWT_616"/>
<dbReference type="eggNOG" id="COG1351">
    <property type="taxonomic scope" value="Bacteria"/>
</dbReference>
<dbReference type="HOGENOM" id="CLU_067790_0_0_11"/>
<dbReference type="UniPathway" id="UPA00575"/>
<dbReference type="Proteomes" id="UP000002200">
    <property type="component" value="Chromosome"/>
</dbReference>
<dbReference type="GO" id="GO:0050660">
    <property type="term" value="F:flavin adenine dinucleotide binding"/>
    <property type="evidence" value="ECO:0007669"/>
    <property type="project" value="InterPro"/>
</dbReference>
<dbReference type="GO" id="GO:0070402">
    <property type="term" value="F:NADPH binding"/>
    <property type="evidence" value="ECO:0007669"/>
    <property type="project" value="TreeGrafter"/>
</dbReference>
<dbReference type="GO" id="GO:0050797">
    <property type="term" value="F:thymidylate synthase (FAD) activity"/>
    <property type="evidence" value="ECO:0007669"/>
    <property type="project" value="UniProtKB-UniRule"/>
</dbReference>
<dbReference type="GO" id="GO:0004799">
    <property type="term" value="F:thymidylate synthase activity"/>
    <property type="evidence" value="ECO:0007669"/>
    <property type="project" value="TreeGrafter"/>
</dbReference>
<dbReference type="GO" id="GO:0006231">
    <property type="term" value="P:dTMP biosynthetic process"/>
    <property type="evidence" value="ECO:0007669"/>
    <property type="project" value="UniProtKB-UniRule"/>
</dbReference>
<dbReference type="GO" id="GO:0006235">
    <property type="term" value="P:dTTP biosynthetic process"/>
    <property type="evidence" value="ECO:0007669"/>
    <property type="project" value="UniProtKB-UniRule"/>
</dbReference>
<dbReference type="GO" id="GO:0032259">
    <property type="term" value="P:methylation"/>
    <property type="evidence" value="ECO:0007669"/>
    <property type="project" value="UniProtKB-KW"/>
</dbReference>
<dbReference type="CDD" id="cd20175">
    <property type="entry name" value="ThyX"/>
    <property type="match status" value="1"/>
</dbReference>
<dbReference type="Gene3D" id="3.30.1360.170">
    <property type="match status" value="1"/>
</dbReference>
<dbReference type="HAMAP" id="MF_01408">
    <property type="entry name" value="ThyX"/>
    <property type="match status" value="1"/>
</dbReference>
<dbReference type="InterPro" id="IPR003669">
    <property type="entry name" value="Thymidylate_synthase_ThyX"/>
</dbReference>
<dbReference type="InterPro" id="IPR036098">
    <property type="entry name" value="Thymidylate_synthase_ThyX_sf"/>
</dbReference>
<dbReference type="NCBIfam" id="TIGR02170">
    <property type="entry name" value="thyX"/>
    <property type="match status" value="1"/>
</dbReference>
<dbReference type="PANTHER" id="PTHR34934">
    <property type="entry name" value="FLAVIN-DEPENDENT THYMIDYLATE SYNTHASE"/>
    <property type="match status" value="1"/>
</dbReference>
<dbReference type="PANTHER" id="PTHR34934:SF1">
    <property type="entry name" value="FLAVIN-DEPENDENT THYMIDYLATE SYNTHASE"/>
    <property type="match status" value="1"/>
</dbReference>
<dbReference type="Pfam" id="PF02511">
    <property type="entry name" value="Thy1"/>
    <property type="match status" value="1"/>
</dbReference>
<dbReference type="SUPFAM" id="SSF69796">
    <property type="entry name" value="Thymidylate synthase-complementing protein Thy1"/>
    <property type="match status" value="1"/>
</dbReference>
<dbReference type="PROSITE" id="PS51331">
    <property type="entry name" value="THYX"/>
    <property type="match status" value="1"/>
</dbReference>
<comment type="function">
    <text evidence="1">Catalyzes the reductive methylation of 2'-deoxyuridine-5'-monophosphate (dUMP) to 2'-deoxythymidine-5'-monophosphate (dTMP) while utilizing 5,10-methylenetetrahydrofolate (mTHF) as the methyl donor, and NADPH and FADH(2) as the reductant.</text>
</comment>
<comment type="catalytic activity">
    <reaction evidence="1">
        <text>dUMP + (6R)-5,10-methylene-5,6,7,8-tetrahydrofolate + NADPH + H(+) = dTMP + (6S)-5,6,7,8-tetrahydrofolate + NADP(+)</text>
        <dbReference type="Rhea" id="RHEA:29043"/>
        <dbReference type="ChEBI" id="CHEBI:15378"/>
        <dbReference type="ChEBI" id="CHEBI:15636"/>
        <dbReference type="ChEBI" id="CHEBI:57453"/>
        <dbReference type="ChEBI" id="CHEBI:57783"/>
        <dbReference type="ChEBI" id="CHEBI:58349"/>
        <dbReference type="ChEBI" id="CHEBI:63528"/>
        <dbReference type="ChEBI" id="CHEBI:246422"/>
        <dbReference type="EC" id="2.1.1.148"/>
    </reaction>
</comment>
<comment type="cofactor">
    <cofactor evidence="1">
        <name>FAD</name>
        <dbReference type="ChEBI" id="CHEBI:57692"/>
    </cofactor>
    <text evidence="1">Binds 4 FAD per tetramer. Each FAD binding site is formed by three monomers.</text>
</comment>
<comment type="pathway">
    <text evidence="1">Pyrimidine metabolism; dTTP biosynthesis.</text>
</comment>
<comment type="subunit">
    <text evidence="1">Homotetramer.</text>
</comment>
<comment type="similarity">
    <text evidence="1">Belongs to the thymidylate synthase ThyX family.</text>
</comment>
<gene>
    <name evidence="1" type="primary">thyX</name>
    <name type="ordered locus">TWT_616</name>
</gene>
<protein>
    <recommendedName>
        <fullName evidence="1">Flavin-dependent thymidylate synthase</fullName>
        <shortName evidence="1">FDTS</shortName>
        <ecNumber evidence="1">2.1.1.148</ecNumber>
    </recommendedName>
    <alternativeName>
        <fullName evidence="1">FAD-dependent thymidylate synthase</fullName>
    </alternativeName>
    <alternativeName>
        <fullName evidence="1">Thymidylate synthase ThyX</fullName>
        <shortName evidence="1">TS</shortName>
        <shortName evidence="1">TSase</shortName>
    </alternativeName>
</protein>
<feature type="chain" id="PRO_0000175585" description="Flavin-dependent thymidylate synthase">
    <location>
        <begin position="1"/>
        <end position="244"/>
    </location>
</feature>
<feature type="domain" description="ThyX" evidence="2">
    <location>
        <begin position="17"/>
        <end position="239"/>
    </location>
</feature>
<feature type="short sequence motif" description="ThyX motif" evidence="1">
    <location>
        <begin position="91"/>
        <end position="101"/>
    </location>
</feature>
<feature type="active site" description="Involved in ionization of N3 of dUMP, leading to its activation" evidence="1">
    <location>
        <position position="198"/>
    </location>
</feature>
<feature type="binding site" evidence="1">
    <location>
        <position position="68"/>
    </location>
    <ligand>
        <name>FAD</name>
        <dbReference type="ChEBI" id="CHEBI:57692"/>
        <note>ligand shared between neighboring subunits</note>
    </ligand>
</feature>
<feature type="binding site" evidence="1">
    <location>
        <begin position="88"/>
        <end position="91"/>
    </location>
    <ligand>
        <name>dUMP</name>
        <dbReference type="ChEBI" id="CHEBI:246422"/>
        <note>ligand shared between dimeric partners</note>
    </ligand>
</feature>
<feature type="binding site" evidence="1">
    <location>
        <begin position="91"/>
        <end position="93"/>
    </location>
    <ligand>
        <name>FAD</name>
        <dbReference type="ChEBI" id="CHEBI:57692"/>
        <note>ligand shared between neighboring subunits</note>
    </ligand>
</feature>
<feature type="binding site" description="in other chain" evidence="1">
    <location>
        <begin position="99"/>
        <end position="103"/>
    </location>
    <ligand>
        <name>dUMP</name>
        <dbReference type="ChEBI" id="CHEBI:246422"/>
        <note>ligand shared between dimeric partners</note>
    </ligand>
</feature>
<feature type="binding site" evidence="1">
    <location>
        <position position="99"/>
    </location>
    <ligand>
        <name>FAD</name>
        <dbReference type="ChEBI" id="CHEBI:57692"/>
        <note>ligand shared between neighboring subunits</note>
    </ligand>
</feature>
<feature type="binding site" description="in other chain" evidence="1">
    <location>
        <position position="171"/>
    </location>
    <ligand>
        <name>dUMP</name>
        <dbReference type="ChEBI" id="CHEBI:246422"/>
        <note>ligand shared between dimeric partners</note>
    </ligand>
</feature>
<feature type="binding site" evidence="1">
    <location>
        <begin position="187"/>
        <end position="189"/>
    </location>
    <ligand>
        <name>FAD</name>
        <dbReference type="ChEBI" id="CHEBI:57692"/>
        <note>ligand shared between neighboring subunits</note>
    </ligand>
</feature>
<feature type="binding site" evidence="1">
    <location>
        <position position="193"/>
    </location>
    <ligand>
        <name>FAD</name>
        <dbReference type="ChEBI" id="CHEBI:57692"/>
        <note>ligand shared between neighboring subunits</note>
    </ligand>
</feature>
<feature type="binding site" evidence="1">
    <location>
        <position position="198"/>
    </location>
    <ligand>
        <name>dUMP</name>
        <dbReference type="ChEBI" id="CHEBI:246422"/>
        <note>ligand shared between dimeric partners</note>
    </ligand>
</feature>
<organism>
    <name type="scientific">Tropheryma whipplei (strain Twist)</name>
    <name type="common">Whipple's bacillus</name>
    <dbReference type="NCBI Taxonomy" id="203267"/>
    <lineage>
        <taxon>Bacteria</taxon>
        <taxon>Bacillati</taxon>
        <taxon>Actinomycetota</taxon>
        <taxon>Actinomycetes</taxon>
        <taxon>Micrococcales</taxon>
        <taxon>Tropherymataceae</taxon>
        <taxon>Tropheryma</taxon>
    </lineage>
</organism>
<reference key="1">
    <citation type="journal article" date="2003" name="Genome Res.">
        <title>Tropheryma whipplei twist: a human pathogenic Actinobacteria with a reduced genome.</title>
        <authorList>
            <person name="Raoult D."/>
            <person name="Ogata H."/>
            <person name="Audic S."/>
            <person name="Robert C."/>
            <person name="Suhre K."/>
            <person name="Drancourt M."/>
            <person name="Claverie J.-M."/>
        </authorList>
    </citation>
    <scope>NUCLEOTIDE SEQUENCE [LARGE SCALE GENOMIC DNA]</scope>
    <source>
        <strain>Twist</strain>
    </source>
</reference>
<accession>Q83MS7</accession>
<sequence length="244" mass="27959">MLQCLFFVMDPVFLSEITVELVKHSASDSDVVFSARVSTLGSFVAVTDCLSNRDIGLITFLMRERHGSPFEHSHMTFRISAPIFVFREFMRHRIASYNEESGRYKNLDPVFYIPDEKRKLVQIGAPGAYKFEEGTSEQYGLLIEEMKELSLAAYDTYKRLLACGIAREVARMILPLNLYSTMYVTINARSLMNFLSVRTSRANSAFHSYPQREIELCADRIEEIWKGLMPETHAAFEKQGRVAP</sequence>
<proteinExistence type="inferred from homology"/>
<keyword id="KW-0274">FAD</keyword>
<keyword id="KW-0285">Flavoprotein</keyword>
<keyword id="KW-0489">Methyltransferase</keyword>
<keyword id="KW-0521">NADP</keyword>
<keyword id="KW-0545">Nucleotide biosynthesis</keyword>
<keyword id="KW-1185">Reference proteome</keyword>
<keyword id="KW-0808">Transferase</keyword>
<evidence type="ECO:0000255" key="1">
    <source>
        <dbReference type="HAMAP-Rule" id="MF_01408"/>
    </source>
</evidence>
<evidence type="ECO:0000255" key="2">
    <source>
        <dbReference type="PROSITE-ProRule" id="PRU00661"/>
    </source>
</evidence>
<name>THYX_TROWT</name>